<evidence type="ECO:0000255" key="1">
    <source>
        <dbReference type="HAMAP-Rule" id="MF_01445"/>
    </source>
</evidence>
<keyword id="KW-0012">Acyltransferase</keyword>
<keyword id="KW-0963">Cytoplasm</keyword>
<keyword id="KW-0408">Iron</keyword>
<keyword id="KW-0479">Metal-binding</keyword>
<keyword id="KW-0808">Transferase</keyword>
<keyword id="KW-0819">tRNA processing</keyword>
<gene>
    <name evidence="1" type="primary">tsaD</name>
    <name type="synonym">gcp</name>
    <name type="ordered locus">SPG_0132</name>
</gene>
<proteinExistence type="inferred from homology"/>
<reference key="1">
    <citation type="journal article" date="2001" name="Microb. Drug Resist.">
        <title>Annotated draft genomic sequence from a Streptococcus pneumoniae type 19F clinical isolate.</title>
        <authorList>
            <person name="Dopazo J."/>
            <person name="Mendoza A."/>
            <person name="Herrero J."/>
            <person name="Caldara F."/>
            <person name="Humbert Y."/>
            <person name="Friedli L."/>
            <person name="Guerrier M."/>
            <person name="Grand-Schenk E."/>
            <person name="Gandin C."/>
            <person name="de Francesco M."/>
            <person name="Polissi A."/>
            <person name="Buell G."/>
            <person name="Feger G."/>
            <person name="Garcia E."/>
            <person name="Peitsch M."/>
            <person name="Garcia-Bustos J.F."/>
        </authorList>
    </citation>
    <scope>NUCLEOTIDE SEQUENCE [LARGE SCALE GENOMIC DNA]</scope>
    <source>
        <strain>G54</strain>
    </source>
</reference>
<reference key="2">
    <citation type="submission" date="2008-03" db="EMBL/GenBank/DDBJ databases">
        <title>Pneumococcal beta glucoside metabolism investigated by whole genome comparison.</title>
        <authorList>
            <person name="Mulas L."/>
            <person name="Trappetti C."/>
            <person name="Hakenbeck R."/>
            <person name="Iannelli F."/>
            <person name="Pozzi G."/>
            <person name="Davidsen T.M."/>
            <person name="Tettelin H."/>
            <person name="Oggioni M."/>
        </authorList>
    </citation>
    <scope>NUCLEOTIDE SEQUENCE [LARGE SCALE GENOMIC DNA]</scope>
    <source>
        <strain>G54</strain>
    </source>
</reference>
<feature type="chain" id="PRO_1000146028" description="tRNA N6-adenosine threonylcarbamoyltransferase">
    <location>
        <begin position="1"/>
        <end position="336"/>
    </location>
</feature>
<feature type="binding site" evidence="1">
    <location>
        <position position="114"/>
    </location>
    <ligand>
        <name>Fe cation</name>
        <dbReference type="ChEBI" id="CHEBI:24875"/>
    </ligand>
</feature>
<feature type="binding site" evidence="1">
    <location>
        <position position="118"/>
    </location>
    <ligand>
        <name>Fe cation</name>
        <dbReference type="ChEBI" id="CHEBI:24875"/>
    </ligand>
</feature>
<feature type="binding site" evidence="1">
    <location>
        <begin position="136"/>
        <end position="140"/>
    </location>
    <ligand>
        <name>substrate</name>
    </ligand>
</feature>
<feature type="binding site" evidence="1">
    <location>
        <position position="169"/>
    </location>
    <ligand>
        <name>substrate</name>
    </ligand>
</feature>
<feature type="binding site" evidence="1">
    <location>
        <position position="182"/>
    </location>
    <ligand>
        <name>substrate</name>
    </ligand>
</feature>
<feature type="binding site" evidence="1">
    <location>
        <position position="186"/>
    </location>
    <ligand>
        <name>substrate</name>
    </ligand>
</feature>
<feature type="binding site" evidence="1">
    <location>
        <position position="275"/>
    </location>
    <ligand>
        <name>substrate</name>
    </ligand>
</feature>
<feature type="binding site" evidence="1">
    <location>
        <position position="301"/>
    </location>
    <ligand>
        <name>Fe cation</name>
        <dbReference type="ChEBI" id="CHEBI:24875"/>
    </ligand>
</feature>
<name>TSAD_STRP4</name>
<dbReference type="EC" id="2.3.1.234" evidence="1"/>
<dbReference type="EMBL" id="CP001015">
    <property type="protein sequence ID" value="ACF56308.1"/>
    <property type="molecule type" value="Genomic_DNA"/>
</dbReference>
<dbReference type="SMR" id="B5E614"/>
<dbReference type="KEGG" id="spx:SPG_0132"/>
<dbReference type="HOGENOM" id="CLU_023208_0_1_9"/>
<dbReference type="GO" id="GO:0005737">
    <property type="term" value="C:cytoplasm"/>
    <property type="evidence" value="ECO:0007669"/>
    <property type="project" value="UniProtKB-SubCell"/>
</dbReference>
<dbReference type="GO" id="GO:0005506">
    <property type="term" value="F:iron ion binding"/>
    <property type="evidence" value="ECO:0007669"/>
    <property type="project" value="UniProtKB-UniRule"/>
</dbReference>
<dbReference type="GO" id="GO:0061711">
    <property type="term" value="F:N(6)-L-threonylcarbamoyladenine synthase activity"/>
    <property type="evidence" value="ECO:0007669"/>
    <property type="project" value="UniProtKB-EC"/>
</dbReference>
<dbReference type="GO" id="GO:0002949">
    <property type="term" value="P:tRNA threonylcarbamoyladenosine modification"/>
    <property type="evidence" value="ECO:0007669"/>
    <property type="project" value="UniProtKB-UniRule"/>
</dbReference>
<dbReference type="CDD" id="cd24133">
    <property type="entry name" value="ASKHA_NBD_TsaD_bac"/>
    <property type="match status" value="1"/>
</dbReference>
<dbReference type="FunFam" id="3.30.420.40:FF:000012">
    <property type="entry name" value="tRNA N6-adenosine threonylcarbamoyltransferase"/>
    <property type="match status" value="1"/>
</dbReference>
<dbReference type="FunFam" id="3.30.420.40:FF:000040">
    <property type="entry name" value="tRNA N6-adenosine threonylcarbamoyltransferase"/>
    <property type="match status" value="1"/>
</dbReference>
<dbReference type="Gene3D" id="3.30.420.40">
    <property type="match status" value="2"/>
</dbReference>
<dbReference type="HAMAP" id="MF_01445">
    <property type="entry name" value="TsaD"/>
    <property type="match status" value="1"/>
</dbReference>
<dbReference type="InterPro" id="IPR043129">
    <property type="entry name" value="ATPase_NBD"/>
</dbReference>
<dbReference type="InterPro" id="IPR000905">
    <property type="entry name" value="Gcp-like_dom"/>
</dbReference>
<dbReference type="InterPro" id="IPR017861">
    <property type="entry name" value="KAE1/TsaD"/>
</dbReference>
<dbReference type="InterPro" id="IPR017860">
    <property type="entry name" value="Peptidase_M22_CS"/>
</dbReference>
<dbReference type="InterPro" id="IPR022450">
    <property type="entry name" value="TsaD"/>
</dbReference>
<dbReference type="NCBIfam" id="TIGR00329">
    <property type="entry name" value="gcp_kae1"/>
    <property type="match status" value="1"/>
</dbReference>
<dbReference type="NCBIfam" id="TIGR03723">
    <property type="entry name" value="T6A_TsaD_YgjD"/>
    <property type="match status" value="1"/>
</dbReference>
<dbReference type="PANTHER" id="PTHR11735">
    <property type="entry name" value="TRNA N6-ADENOSINE THREONYLCARBAMOYLTRANSFERASE"/>
    <property type="match status" value="1"/>
</dbReference>
<dbReference type="PANTHER" id="PTHR11735:SF6">
    <property type="entry name" value="TRNA N6-ADENOSINE THREONYLCARBAMOYLTRANSFERASE, MITOCHONDRIAL"/>
    <property type="match status" value="1"/>
</dbReference>
<dbReference type="Pfam" id="PF00814">
    <property type="entry name" value="TsaD"/>
    <property type="match status" value="1"/>
</dbReference>
<dbReference type="PRINTS" id="PR00789">
    <property type="entry name" value="OSIALOPTASE"/>
</dbReference>
<dbReference type="SUPFAM" id="SSF53067">
    <property type="entry name" value="Actin-like ATPase domain"/>
    <property type="match status" value="1"/>
</dbReference>
<dbReference type="PROSITE" id="PS01016">
    <property type="entry name" value="GLYCOPROTEASE"/>
    <property type="match status" value="1"/>
</dbReference>
<protein>
    <recommendedName>
        <fullName evidence="1">tRNA N6-adenosine threonylcarbamoyltransferase</fullName>
        <ecNumber evidence="1">2.3.1.234</ecNumber>
    </recommendedName>
    <alternativeName>
        <fullName evidence="1">N6-L-threonylcarbamoyladenine synthase</fullName>
        <shortName evidence="1">t(6)A synthase</shortName>
    </alternativeName>
    <alternativeName>
        <fullName evidence="1">t(6)A37 threonylcarbamoyladenosine biosynthesis protein TsaD</fullName>
    </alternativeName>
    <alternativeName>
        <fullName evidence="1">tRNA threonylcarbamoyladenosine biosynthesis protein TsaD</fullName>
    </alternativeName>
</protein>
<sequence length="336" mass="36201">MKDRYILAFETSCDETSVAVLKNDDELLSNVIASQIESHKRFGGVVPEVASRHHVEVITACIEEALAEAGITEEDVTAVAVTYGPGLVGALLVGLSAAKAFAWAHGLPLIPVNHMAGHLMAAQSVEPLEFPLLALLVSGGHTELVYVSEAGDYKIVGETRDDAVGEAYDKVGRVMGLTYPAGREIDELVHQGQDIYDFPRAMIKEDNLEFSFSGLKSAFINLHHNAEQKGESLSTEDLCASFQAAVMDILMAKTKKALEKYPVKTLVVAGGVAANKGLRERLAAEITDVKVIIPPLRLCGDNAGMIAYASVSEWNKENFAGWDLNAKPSLAFDTME</sequence>
<organism>
    <name type="scientific">Streptococcus pneumoniae serotype 19F (strain G54)</name>
    <dbReference type="NCBI Taxonomy" id="512566"/>
    <lineage>
        <taxon>Bacteria</taxon>
        <taxon>Bacillati</taxon>
        <taxon>Bacillota</taxon>
        <taxon>Bacilli</taxon>
        <taxon>Lactobacillales</taxon>
        <taxon>Streptococcaceae</taxon>
        <taxon>Streptococcus</taxon>
    </lineage>
</organism>
<accession>B5E614</accession>
<comment type="function">
    <text evidence="1">Required for the formation of a threonylcarbamoyl group on adenosine at position 37 (t(6)A37) in tRNAs that read codons beginning with adenine. Is involved in the transfer of the threonylcarbamoyl moiety of threonylcarbamoyl-AMP (TC-AMP) to the N6 group of A37, together with TsaE and TsaB. TsaD likely plays a direct catalytic role in this reaction.</text>
</comment>
<comment type="catalytic activity">
    <reaction evidence="1">
        <text>L-threonylcarbamoyladenylate + adenosine(37) in tRNA = N(6)-L-threonylcarbamoyladenosine(37) in tRNA + AMP + H(+)</text>
        <dbReference type="Rhea" id="RHEA:37059"/>
        <dbReference type="Rhea" id="RHEA-COMP:10162"/>
        <dbReference type="Rhea" id="RHEA-COMP:10163"/>
        <dbReference type="ChEBI" id="CHEBI:15378"/>
        <dbReference type="ChEBI" id="CHEBI:73682"/>
        <dbReference type="ChEBI" id="CHEBI:74411"/>
        <dbReference type="ChEBI" id="CHEBI:74418"/>
        <dbReference type="ChEBI" id="CHEBI:456215"/>
        <dbReference type="EC" id="2.3.1.234"/>
    </reaction>
</comment>
<comment type="cofactor">
    <cofactor evidence="1">
        <name>Fe(2+)</name>
        <dbReference type="ChEBI" id="CHEBI:29033"/>
    </cofactor>
    <text evidence="1">Binds 1 Fe(2+) ion per subunit.</text>
</comment>
<comment type="subcellular location">
    <subcellularLocation>
        <location evidence="1">Cytoplasm</location>
    </subcellularLocation>
</comment>
<comment type="similarity">
    <text evidence="1">Belongs to the KAE1 / TsaD family.</text>
</comment>